<accession>B7NLL4</accession>
<gene>
    <name evidence="1" type="primary">rplQ</name>
    <name type="ordered locus">ECIAI39_3789</name>
</gene>
<organism>
    <name type="scientific">Escherichia coli O7:K1 (strain IAI39 / ExPEC)</name>
    <dbReference type="NCBI Taxonomy" id="585057"/>
    <lineage>
        <taxon>Bacteria</taxon>
        <taxon>Pseudomonadati</taxon>
        <taxon>Pseudomonadota</taxon>
        <taxon>Gammaproteobacteria</taxon>
        <taxon>Enterobacterales</taxon>
        <taxon>Enterobacteriaceae</taxon>
        <taxon>Escherichia</taxon>
    </lineage>
</organism>
<name>RL17_ECO7I</name>
<evidence type="ECO:0000255" key="1">
    <source>
        <dbReference type="HAMAP-Rule" id="MF_01368"/>
    </source>
</evidence>
<evidence type="ECO:0000305" key="2"/>
<feature type="chain" id="PRO_1000144418" description="Large ribosomal subunit protein bL17">
    <location>
        <begin position="1"/>
        <end position="127"/>
    </location>
</feature>
<sequence length="127" mass="14365">MRHRKSGRQLNRNSSHRQAMFRNMAGSLVRHEIIKTTLPKAKELRRVVEPLITLAKTDSVANRRLAFARTRDNEIVAKLFNELGPRFASRAGGYTRILKCGFRAGDNAPMAYIELVDRSEKAEAAAE</sequence>
<keyword id="KW-0687">Ribonucleoprotein</keyword>
<keyword id="KW-0689">Ribosomal protein</keyword>
<dbReference type="EMBL" id="CU928164">
    <property type="protein sequence ID" value="CAR19903.1"/>
    <property type="molecule type" value="Genomic_DNA"/>
</dbReference>
<dbReference type="RefSeq" id="WP_001216368.1">
    <property type="nucleotide sequence ID" value="NC_011750.1"/>
</dbReference>
<dbReference type="RefSeq" id="YP_002409686.1">
    <property type="nucleotide sequence ID" value="NC_011750.1"/>
</dbReference>
<dbReference type="SMR" id="B7NLL4"/>
<dbReference type="STRING" id="585057.ECIAI39_3789"/>
<dbReference type="GeneID" id="97442834"/>
<dbReference type="KEGG" id="ect:ECIAI39_3789"/>
<dbReference type="PATRIC" id="fig|585057.6.peg.3925"/>
<dbReference type="HOGENOM" id="CLU_074407_2_0_6"/>
<dbReference type="Proteomes" id="UP000000749">
    <property type="component" value="Chromosome"/>
</dbReference>
<dbReference type="GO" id="GO:0022625">
    <property type="term" value="C:cytosolic large ribosomal subunit"/>
    <property type="evidence" value="ECO:0007669"/>
    <property type="project" value="TreeGrafter"/>
</dbReference>
<dbReference type="GO" id="GO:0003735">
    <property type="term" value="F:structural constituent of ribosome"/>
    <property type="evidence" value="ECO:0007669"/>
    <property type="project" value="InterPro"/>
</dbReference>
<dbReference type="GO" id="GO:0006412">
    <property type="term" value="P:translation"/>
    <property type="evidence" value="ECO:0007669"/>
    <property type="project" value="UniProtKB-UniRule"/>
</dbReference>
<dbReference type="FunFam" id="3.90.1030.10:FF:000001">
    <property type="entry name" value="50S ribosomal protein L17"/>
    <property type="match status" value="1"/>
</dbReference>
<dbReference type="Gene3D" id="3.90.1030.10">
    <property type="entry name" value="Ribosomal protein L17"/>
    <property type="match status" value="1"/>
</dbReference>
<dbReference type="HAMAP" id="MF_01368">
    <property type="entry name" value="Ribosomal_bL17"/>
    <property type="match status" value="1"/>
</dbReference>
<dbReference type="InterPro" id="IPR000456">
    <property type="entry name" value="Ribosomal_bL17"/>
</dbReference>
<dbReference type="InterPro" id="IPR047859">
    <property type="entry name" value="Ribosomal_bL17_CS"/>
</dbReference>
<dbReference type="InterPro" id="IPR036373">
    <property type="entry name" value="Ribosomal_bL17_sf"/>
</dbReference>
<dbReference type="NCBIfam" id="TIGR00059">
    <property type="entry name" value="L17"/>
    <property type="match status" value="1"/>
</dbReference>
<dbReference type="PANTHER" id="PTHR14413:SF16">
    <property type="entry name" value="LARGE RIBOSOMAL SUBUNIT PROTEIN BL17M"/>
    <property type="match status" value="1"/>
</dbReference>
<dbReference type="PANTHER" id="PTHR14413">
    <property type="entry name" value="RIBOSOMAL PROTEIN L17"/>
    <property type="match status" value="1"/>
</dbReference>
<dbReference type="Pfam" id="PF01196">
    <property type="entry name" value="Ribosomal_L17"/>
    <property type="match status" value="1"/>
</dbReference>
<dbReference type="SUPFAM" id="SSF64263">
    <property type="entry name" value="Prokaryotic ribosomal protein L17"/>
    <property type="match status" value="1"/>
</dbReference>
<dbReference type="PROSITE" id="PS01167">
    <property type="entry name" value="RIBOSOMAL_L17"/>
    <property type="match status" value="1"/>
</dbReference>
<reference key="1">
    <citation type="journal article" date="2009" name="PLoS Genet.">
        <title>Organised genome dynamics in the Escherichia coli species results in highly diverse adaptive paths.</title>
        <authorList>
            <person name="Touchon M."/>
            <person name="Hoede C."/>
            <person name="Tenaillon O."/>
            <person name="Barbe V."/>
            <person name="Baeriswyl S."/>
            <person name="Bidet P."/>
            <person name="Bingen E."/>
            <person name="Bonacorsi S."/>
            <person name="Bouchier C."/>
            <person name="Bouvet O."/>
            <person name="Calteau A."/>
            <person name="Chiapello H."/>
            <person name="Clermont O."/>
            <person name="Cruveiller S."/>
            <person name="Danchin A."/>
            <person name="Diard M."/>
            <person name="Dossat C."/>
            <person name="Karoui M.E."/>
            <person name="Frapy E."/>
            <person name="Garry L."/>
            <person name="Ghigo J.M."/>
            <person name="Gilles A.M."/>
            <person name="Johnson J."/>
            <person name="Le Bouguenec C."/>
            <person name="Lescat M."/>
            <person name="Mangenot S."/>
            <person name="Martinez-Jehanne V."/>
            <person name="Matic I."/>
            <person name="Nassif X."/>
            <person name="Oztas S."/>
            <person name="Petit M.A."/>
            <person name="Pichon C."/>
            <person name="Rouy Z."/>
            <person name="Ruf C.S."/>
            <person name="Schneider D."/>
            <person name="Tourret J."/>
            <person name="Vacherie B."/>
            <person name="Vallenet D."/>
            <person name="Medigue C."/>
            <person name="Rocha E.P.C."/>
            <person name="Denamur E."/>
        </authorList>
    </citation>
    <scope>NUCLEOTIDE SEQUENCE [LARGE SCALE GENOMIC DNA]</scope>
    <source>
        <strain>IAI39 / ExPEC</strain>
    </source>
</reference>
<comment type="subunit">
    <text evidence="1">Part of the 50S ribosomal subunit. Contacts protein L32.</text>
</comment>
<comment type="similarity">
    <text evidence="1">Belongs to the bacterial ribosomal protein bL17 family.</text>
</comment>
<proteinExistence type="inferred from homology"/>
<protein>
    <recommendedName>
        <fullName evidence="1">Large ribosomal subunit protein bL17</fullName>
    </recommendedName>
    <alternativeName>
        <fullName evidence="2">50S ribosomal protein L17</fullName>
    </alternativeName>
</protein>